<dbReference type="EMBL" id="X63765">
    <property type="protein sequence ID" value="CAA45300.1"/>
    <property type="molecule type" value="Genomic_DNA"/>
</dbReference>
<dbReference type="SMR" id="P0A430"/>
<dbReference type="GO" id="GO:0009522">
    <property type="term" value="C:photosystem I"/>
    <property type="evidence" value="ECO:0007669"/>
    <property type="project" value="UniProtKB-KW"/>
</dbReference>
<dbReference type="GO" id="GO:0031676">
    <property type="term" value="C:plasma membrane-derived thylakoid membrane"/>
    <property type="evidence" value="ECO:0007669"/>
    <property type="project" value="UniProtKB-SubCell"/>
</dbReference>
<dbReference type="GO" id="GO:0015979">
    <property type="term" value="P:photosynthesis"/>
    <property type="evidence" value="ECO:0007669"/>
    <property type="project" value="UniProtKB-UniRule"/>
</dbReference>
<dbReference type="Gene3D" id="1.20.5.510">
    <property type="entry name" value="Single helix bin"/>
    <property type="match status" value="1"/>
</dbReference>
<dbReference type="HAMAP" id="MF_00522">
    <property type="entry name" value="PSI_PsaJ"/>
    <property type="match status" value="1"/>
</dbReference>
<dbReference type="InterPro" id="IPR002615">
    <property type="entry name" value="PSI_PsaJ"/>
</dbReference>
<dbReference type="InterPro" id="IPR036062">
    <property type="entry name" value="PSI_PsaJ_sf"/>
</dbReference>
<dbReference type="NCBIfam" id="NF002743">
    <property type="entry name" value="PRK02733.1"/>
    <property type="match status" value="1"/>
</dbReference>
<dbReference type="PANTHER" id="PTHR36082">
    <property type="match status" value="1"/>
</dbReference>
<dbReference type="PANTHER" id="PTHR36082:SF2">
    <property type="entry name" value="PHOTOSYSTEM I REACTION CENTER SUBUNIT IX"/>
    <property type="match status" value="1"/>
</dbReference>
<dbReference type="Pfam" id="PF01701">
    <property type="entry name" value="PSI_PsaJ"/>
    <property type="match status" value="1"/>
</dbReference>
<dbReference type="SUPFAM" id="SSF81544">
    <property type="entry name" value="Subunit IX of photosystem I reaction centre, PsaJ"/>
    <property type="match status" value="1"/>
</dbReference>
<feature type="chain" id="PRO_0000207825" description="Photosystem I reaction center subunit IX">
    <location>
        <begin position="1"/>
        <end position="41"/>
    </location>
</feature>
<feature type="transmembrane region" description="Helical" evidence="2">
    <location>
        <begin position="7"/>
        <end position="27"/>
    </location>
</feature>
<accession>P0A430</accession>
<accession>P25901</accession>
<evidence type="ECO:0000250" key="1"/>
<evidence type="ECO:0000255" key="2"/>
<evidence type="ECO:0000305" key="3"/>
<comment type="function">
    <text>May help in the organization of the PsaE and PsaF subunits.</text>
</comment>
<comment type="subcellular location">
    <subcellularLocation>
        <location evidence="1">Cellular thylakoid membrane</location>
        <topology evidence="1">Single-pass membrane protein</topology>
    </subcellularLocation>
</comment>
<comment type="similarity">
    <text evidence="3">Belongs to the PsaJ family.</text>
</comment>
<organism>
    <name type="scientific">Synechococcus elongatus</name>
    <dbReference type="NCBI Taxonomy" id="32046"/>
    <lineage>
        <taxon>Bacteria</taxon>
        <taxon>Bacillati</taxon>
        <taxon>Cyanobacteriota</taxon>
        <taxon>Cyanophyceae</taxon>
        <taxon>Synechococcales</taxon>
        <taxon>Synechococcaceae</taxon>
        <taxon>Synechococcus</taxon>
    </lineage>
</organism>
<reference key="1">
    <citation type="journal article" date="1993" name="Gene">
        <title>Genes encoding eleven subunits of photosystem I from the thermophilic cyanobacterium Synechococcus sp.</title>
        <authorList>
            <person name="Muehlenhoff U."/>
            <person name="Haehnel W."/>
            <person name="Witt H.T."/>
            <person name="Herrmann R.G."/>
        </authorList>
    </citation>
    <scope>NUCLEOTIDE SEQUENCE [GENOMIC DNA]</scope>
</reference>
<protein>
    <recommendedName>
        <fullName>Photosystem I reaction center subunit IX</fullName>
    </recommendedName>
</protein>
<sequence length="41" mass="4767">MKHFLTYLSTAPVLAAIWMTITAGILIEFNRFYPDLLFHPL</sequence>
<name>PSAJ_SYNEL</name>
<keyword id="KW-0472">Membrane</keyword>
<keyword id="KW-0602">Photosynthesis</keyword>
<keyword id="KW-0603">Photosystem I</keyword>
<keyword id="KW-0793">Thylakoid</keyword>
<keyword id="KW-0812">Transmembrane</keyword>
<keyword id="KW-1133">Transmembrane helix</keyword>
<gene>
    <name type="primary">psaJ</name>
</gene>
<proteinExistence type="inferred from homology"/>